<evidence type="ECO:0000250" key="1"/>
<evidence type="ECO:0000255" key="2"/>
<evidence type="ECO:0000269" key="3">
    <source>
    </source>
</evidence>
<evidence type="ECO:0000303" key="4">
    <source>
    </source>
</evidence>
<evidence type="ECO:0000305" key="5"/>
<evidence type="ECO:0000305" key="6">
    <source>
    </source>
</evidence>
<organism>
    <name type="scientific">Mus musculus</name>
    <name type="common">Mouse</name>
    <dbReference type="NCBI Taxonomy" id="10090"/>
    <lineage>
        <taxon>Eukaryota</taxon>
        <taxon>Metazoa</taxon>
        <taxon>Chordata</taxon>
        <taxon>Craniata</taxon>
        <taxon>Vertebrata</taxon>
        <taxon>Euteleostomi</taxon>
        <taxon>Mammalia</taxon>
        <taxon>Eutheria</taxon>
        <taxon>Euarchontoglires</taxon>
        <taxon>Glires</taxon>
        <taxon>Rodentia</taxon>
        <taxon>Myomorpha</taxon>
        <taxon>Muroidea</taxon>
        <taxon>Muridae</taxon>
        <taxon>Murinae</taxon>
        <taxon>Mus</taxon>
        <taxon>Mus</taxon>
    </lineage>
</organism>
<dbReference type="EMBL" id="AK033554">
    <property type="protein sequence ID" value="BAC28354.1"/>
    <property type="molecule type" value="mRNA"/>
</dbReference>
<dbReference type="EMBL" id="AK050737">
    <property type="protein sequence ID" value="BAC34399.1"/>
    <property type="molecule type" value="mRNA"/>
</dbReference>
<dbReference type="EMBL" id="CH466533">
    <property type="protein sequence ID" value="EDL13857.1"/>
    <property type="molecule type" value="Genomic_DNA"/>
</dbReference>
<dbReference type="EMBL" id="BC065152">
    <property type="protein sequence ID" value="AAH65152.1"/>
    <property type="molecule type" value="mRNA"/>
</dbReference>
<dbReference type="EMBL" id="BC068240">
    <property type="protein sequence ID" value="AAH68240.1"/>
    <property type="molecule type" value="mRNA"/>
</dbReference>
<dbReference type="CCDS" id="CCDS19935.1">
    <molecule id="Q8BKT6-1"/>
</dbReference>
<dbReference type="CCDS" id="CCDS90030.1">
    <molecule id="Q8BKT6-2"/>
</dbReference>
<dbReference type="RefSeq" id="NP_001350743.1">
    <molecule id="Q8BKT6-2"/>
    <property type="nucleotide sequence ID" value="NM_001363814.1"/>
</dbReference>
<dbReference type="RefSeq" id="NP_001398676.1">
    <molecule id="Q8BKT6-1"/>
    <property type="nucleotide sequence ID" value="NM_001411747.1"/>
</dbReference>
<dbReference type="RefSeq" id="NP_001398677.1">
    <molecule id="Q8BKT6-1"/>
    <property type="nucleotide sequence ID" value="NM_001411748.1"/>
</dbReference>
<dbReference type="RefSeq" id="NP_001398678.1">
    <molecule id="Q8BKT6-1"/>
    <property type="nucleotide sequence ID" value="NM_001411749.1"/>
</dbReference>
<dbReference type="RefSeq" id="NP_001398679.1">
    <molecule id="Q8BKT6-1"/>
    <property type="nucleotide sequence ID" value="NM_001411750.1"/>
</dbReference>
<dbReference type="RefSeq" id="NP_766595.1">
    <molecule id="Q8BKT6-1"/>
    <property type="nucleotide sequence ID" value="NM_173007.4"/>
</dbReference>
<dbReference type="RefSeq" id="XP_006505153.1">
    <property type="nucleotide sequence ID" value="XM_006505090.2"/>
</dbReference>
<dbReference type="RefSeq" id="XP_006505154.1">
    <molecule id="Q8BKT6-1"/>
    <property type="nucleotide sequence ID" value="XM_006505091.4"/>
</dbReference>
<dbReference type="RefSeq" id="XP_017177090.1">
    <property type="nucleotide sequence ID" value="XM_017321601.1"/>
</dbReference>
<dbReference type="RefSeq" id="XP_017177091.1">
    <property type="nucleotide sequence ID" value="XM_017321602.1"/>
</dbReference>
<dbReference type="SMR" id="Q8BKT6"/>
<dbReference type="FunCoup" id="Q8BKT6">
    <property type="interactions" value="430"/>
</dbReference>
<dbReference type="STRING" id="10090.ENSMUSP00000031678"/>
<dbReference type="PhosphoSitePlus" id="Q8BKT6"/>
<dbReference type="PaxDb" id="10090-ENSMUSP00000031678"/>
<dbReference type="Antibodypedia" id="31686">
    <property type="antibodies" value="190 antibodies from 28 providers"/>
</dbReference>
<dbReference type="DNASU" id="269831"/>
<dbReference type="Ensembl" id="ENSMUST00000031678.10">
    <molecule id="Q8BKT6-1"/>
    <property type="protein sequence ID" value="ENSMUSP00000031678.4"/>
    <property type="gene ID" value="ENSMUSG00000029669.15"/>
</dbReference>
<dbReference type="Ensembl" id="ENSMUST00000120965.8">
    <molecule id="Q8BKT6-2"/>
    <property type="protein sequence ID" value="ENSMUSP00000113384.2"/>
    <property type="gene ID" value="ENSMUSG00000029669.15"/>
</dbReference>
<dbReference type="GeneID" id="269831"/>
<dbReference type="KEGG" id="mmu:269831"/>
<dbReference type="UCSC" id="uc009bar.1">
    <molecule id="Q8BKT6-1"/>
    <property type="organism name" value="mouse"/>
</dbReference>
<dbReference type="UCSC" id="uc012eij.1">
    <molecule id="Q8BKT6-2"/>
    <property type="organism name" value="mouse"/>
</dbReference>
<dbReference type="AGR" id="MGI:1889818"/>
<dbReference type="CTD" id="23554"/>
<dbReference type="MGI" id="MGI:1889818">
    <property type="gene designation" value="Tspan12"/>
</dbReference>
<dbReference type="VEuPathDB" id="HostDB:ENSMUSG00000029669"/>
<dbReference type="eggNOG" id="KOG3882">
    <property type="taxonomic scope" value="Eukaryota"/>
</dbReference>
<dbReference type="GeneTree" id="ENSGT00510000047764"/>
<dbReference type="InParanoid" id="Q8BKT6"/>
<dbReference type="OMA" id="CARHAHF"/>
<dbReference type="OrthoDB" id="8813994at2759"/>
<dbReference type="PhylomeDB" id="Q8BKT6"/>
<dbReference type="TreeFam" id="TF316345"/>
<dbReference type="BioGRID-ORCS" id="269831">
    <property type="hits" value="2 hits in 79 CRISPR screens"/>
</dbReference>
<dbReference type="ChiTaRS" id="Tspan12">
    <property type="organism name" value="mouse"/>
</dbReference>
<dbReference type="PRO" id="PR:Q8BKT6"/>
<dbReference type="Proteomes" id="UP000000589">
    <property type="component" value="Chromosome 6"/>
</dbReference>
<dbReference type="RNAct" id="Q8BKT6">
    <property type="molecule type" value="protein"/>
</dbReference>
<dbReference type="Bgee" id="ENSMUSG00000029669">
    <property type="expression patterns" value="Expressed in brown adipose tissue and 256 other cell types or tissues"/>
</dbReference>
<dbReference type="ExpressionAtlas" id="Q8BKT6">
    <property type="expression patterns" value="baseline and differential"/>
</dbReference>
<dbReference type="GO" id="GO:0005886">
    <property type="term" value="C:plasma membrane"/>
    <property type="evidence" value="ECO:0000314"/>
    <property type="project" value="UniProtKB"/>
</dbReference>
<dbReference type="GO" id="GO:0001525">
    <property type="term" value="P:angiogenesis"/>
    <property type="evidence" value="ECO:0007669"/>
    <property type="project" value="UniProtKB-KW"/>
</dbReference>
<dbReference type="GO" id="GO:0007166">
    <property type="term" value="P:cell surface receptor signaling pathway"/>
    <property type="evidence" value="ECO:0000315"/>
    <property type="project" value="UniProtKB"/>
</dbReference>
<dbReference type="GO" id="GO:0035633">
    <property type="term" value="P:maintenance of blood-brain barrier"/>
    <property type="evidence" value="ECO:0000315"/>
    <property type="project" value="MGI"/>
</dbReference>
<dbReference type="GO" id="GO:0110135">
    <property type="term" value="P:Norrin signaling pathway"/>
    <property type="evidence" value="ECO:0000315"/>
    <property type="project" value="MGI"/>
</dbReference>
<dbReference type="GO" id="GO:0045765">
    <property type="term" value="P:regulation of angiogenesis"/>
    <property type="evidence" value="ECO:0000315"/>
    <property type="project" value="UniProtKB"/>
</dbReference>
<dbReference type="GO" id="GO:0010842">
    <property type="term" value="P:retina layer formation"/>
    <property type="evidence" value="ECO:0000315"/>
    <property type="project" value="UniProtKB"/>
</dbReference>
<dbReference type="CDD" id="cd03157">
    <property type="entry name" value="TM4SF12_like_LEL"/>
    <property type="match status" value="1"/>
</dbReference>
<dbReference type="FunFam" id="1.10.1450.10:FF:000009">
    <property type="entry name" value="Tetraspanin"/>
    <property type="match status" value="1"/>
</dbReference>
<dbReference type="Gene3D" id="1.10.1450.10">
    <property type="entry name" value="Tetraspanin"/>
    <property type="match status" value="1"/>
</dbReference>
<dbReference type="InterPro" id="IPR018499">
    <property type="entry name" value="Tetraspanin/Peripherin"/>
</dbReference>
<dbReference type="InterPro" id="IPR000301">
    <property type="entry name" value="Tetraspanin_animals"/>
</dbReference>
<dbReference type="InterPro" id="IPR018503">
    <property type="entry name" value="Tetraspanin_CS"/>
</dbReference>
<dbReference type="InterPro" id="IPR008952">
    <property type="entry name" value="Tetraspanin_EC2_sf"/>
</dbReference>
<dbReference type="PANTHER" id="PTHR19282">
    <property type="entry name" value="TETRASPANIN"/>
    <property type="match status" value="1"/>
</dbReference>
<dbReference type="PANTHER" id="PTHR19282:SF462">
    <property type="entry name" value="TETRASPANIN-12"/>
    <property type="match status" value="1"/>
</dbReference>
<dbReference type="Pfam" id="PF00335">
    <property type="entry name" value="Tetraspanin"/>
    <property type="match status" value="1"/>
</dbReference>
<dbReference type="PIRSF" id="PIRSF002419">
    <property type="entry name" value="Tetraspanin"/>
    <property type="match status" value="1"/>
</dbReference>
<dbReference type="PRINTS" id="PR00259">
    <property type="entry name" value="TMFOUR"/>
</dbReference>
<dbReference type="SUPFAM" id="SSF48652">
    <property type="entry name" value="Tetraspanin"/>
    <property type="match status" value="1"/>
</dbReference>
<dbReference type="PROSITE" id="PS00421">
    <property type="entry name" value="TM4_1"/>
    <property type="match status" value="1"/>
</dbReference>
<protein>
    <recommendedName>
        <fullName>Tetraspanin-12</fullName>
        <shortName>Tspan-12</shortName>
    </recommendedName>
    <alternativeName>
        <fullName>Transmembrane 4 superfamily member 12</fullName>
    </alternativeName>
</protein>
<accession>Q8BKT6</accession>
<accession>Q6P1C3</accession>
<accession>Q8BZU1</accession>
<gene>
    <name type="primary">Tspan12</name>
    <name type="synonym">Tm4sf12</name>
</gene>
<reference key="1">
    <citation type="journal article" date="2005" name="Science">
        <title>The transcriptional landscape of the mammalian genome.</title>
        <authorList>
            <person name="Carninci P."/>
            <person name="Kasukawa T."/>
            <person name="Katayama S."/>
            <person name="Gough J."/>
            <person name="Frith M.C."/>
            <person name="Maeda N."/>
            <person name="Oyama R."/>
            <person name="Ravasi T."/>
            <person name="Lenhard B."/>
            <person name="Wells C."/>
            <person name="Kodzius R."/>
            <person name="Shimokawa K."/>
            <person name="Bajic V.B."/>
            <person name="Brenner S.E."/>
            <person name="Batalov S."/>
            <person name="Forrest A.R."/>
            <person name="Zavolan M."/>
            <person name="Davis M.J."/>
            <person name="Wilming L.G."/>
            <person name="Aidinis V."/>
            <person name="Allen J.E."/>
            <person name="Ambesi-Impiombato A."/>
            <person name="Apweiler R."/>
            <person name="Aturaliya R.N."/>
            <person name="Bailey T.L."/>
            <person name="Bansal M."/>
            <person name="Baxter L."/>
            <person name="Beisel K.W."/>
            <person name="Bersano T."/>
            <person name="Bono H."/>
            <person name="Chalk A.M."/>
            <person name="Chiu K.P."/>
            <person name="Choudhary V."/>
            <person name="Christoffels A."/>
            <person name="Clutterbuck D.R."/>
            <person name="Crowe M.L."/>
            <person name="Dalla E."/>
            <person name="Dalrymple B.P."/>
            <person name="de Bono B."/>
            <person name="Della Gatta G."/>
            <person name="di Bernardo D."/>
            <person name="Down T."/>
            <person name="Engstrom P."/>
            <person name="Fagiolini M."/>
            <person name="Faulkner G."/>
            <person name="Fletcher C.F."/>
            <person name="Fukushima T."/>
            <person name="Furuno M."/>
            <person name="Futaki S."/>
            <person name="Gariboldi M."/>
            <person name="Georgii-Hemming P."/>
            <person name="Gingeras T.R."/>
            <person name="Gojobori T."/>
            <person name="Green R.E."/>
            <person name="Gustincich S."/>
            <person name="Harbers M."/>
            <person name="Hayashi Y."/>
            <person name="Hensch T.K."/>
            <person name="Hirokawa N."/>
            <person name="Hill D."/>
            <person name="Huminiecki L."/>
            <person name="Iacono M."/>
            <person name="Ikeo K."/>
            <person name="Iwama A."/>
            <person name="Ishikawa T."/>
            <person name="Jakt M."/>
            <person name="Kanapin A."/>
            <person name="Katoh M."/>
            <person name="Kawasawa Y."/>
            <person name="Kelso J."/>
            <person name="Kitamura H."/>
            <person name="Kitano H."/>
            <person name="Kollias G."/>
            <person name="Krishnan S.P."/>
            <person name="Kruger A."/>
            <person name="Kummerfeld S.K."/>
            <person name="Kurochkin I.V."/>
            <person name="Lareau L.F."/>
            <person name="Lazarevic D."/>
            <person name="Lipovich L."/>
            <person name="Liu J."/>
            <person name="Liuni S."/>
            <person name="McWilliam S."/>
            <person name="Madan Babu M."/>
            <person name="Madera M."/>
            <person name="Marchionni L."/>
            <person name="Matsuda H."/>
            <person name="Matsuzawa S."/>
            <person name="Miki H."/>
            <person name="Mignone F."/>
            <person name="Miyake S."/>
            <person name="Morris K."/>
            <person name="Mottagui-Tabar S."/>
            <person name="Mulder N."/>
            <person name="Nakano N."/>
            <person name="Nakauchi H."/>
            <person name="Ng P."/>
            <person name="Nilsson R."/>
            <person name="Nishiguchi S."/>
            <person name="Nishikawa S."/>
            <person name="Nori F."/>
            <person name="Ohara O."/>
            <person name="Okazaki Y."/>
            <person name="Orlando V."/>
            <person name="Pang K.C."/>
            <person name="Pavan W.J."/>
            <person name="Pavesi G."/>
            <person name="Pesole G."/>
            <person name="Petrovsky N."/>
            <person name="Piazza S."/>
            <person name="Reed J."/>
            <person name="Reid J.F."/>
            <person name="Ring B.Z."/>
            <person name="Ringwald M."/>
            <person name="Rost B."/>
            <person name="Ruan Y."/>
            <person name="Salzberg S.L."/>
            <person name="Sandelin A."/>
            <person name="Schneider C."/>
            <person name="Schoenbach C."/>
            <person name="Sekiguchi K."/>
            <person name="Semple C.A."/>
            <person name="Seno S."/>
            <person name="Sessa L."/>
            <person name="Sheng Y."/>
            <person name="Shibata Y."/>
            <person name="Shimada H."/>
            <person name="Shimada K."/>
            <person name="Silva D."/>
            <person name="Sinclair B."/>
            <person name="Sperling S."/>
            <person name="Stupka E."/>
            <person name="Sugiura K."/>
            <person name="Sultana R."/>
            <person name="Takenaka Y."/>
            <person name="Taki K."/>
            <person name="Tammoja K."/>
            <person name="Tan S.L."/>
            <person name="Tang S."/>
            <person name="Taylor M.S."/>
            <person name="Tegner J."/>
            <person name="Teichmann S.A."/>
            <person name="Ueda H.R."/>
            <person name="van Nimwegen E."/>
            <person name="Verardo R."/>
            <person name="Wei C.L."/>
            <person name="Yagi K."/>
            <person name="Yamanishi H."/>
            <person name="Zabarovsky E."/>
            <person name="Zhu S."/>
            <person name="Zimmer A."/>
            <person name="Hide W."/>
            <person name="Bult C."/>
            <person name="Grimmond S.M."/>
            <person name="Teasdale R.D."/>
            <person name="Liu E.T."/>
            <person name="Brusic V."/>
            <person name="Quackenbush J."/>
            <person name="Wahlestedt C."/>
            <person name="Mattick J.S."/>
            <person name="Hume D.A."/>
            <person name="Kai C."/>
            <person name="Sasaki D."/>
            <person name="Tomaru Y."/>
            <person name="Fukuda S."/>
            <person name="Kanamori-Katayama M."/>
            <person name="Suzuki M."/>
            <person name="Aoki J."/>
            <person name="Arakawa T."/>
            <person name="Iida J."/>
            <person name="Imamura K."/>
            <person name="Itoh M."/>
            <person name="Kato T."/>
            <person name="Kawaji H."/>
            <person name="Kawagashira N."/>
            <person name="Kawashima T."/>
            <person name="Kojima M."/>
            <person name="Kondo S."/>
            <person name="Konno H."/>
            <person name="Nakano K."/>
            <person name="Ninomiya N."/>
            <person name="Nishio T."/>
            <person name="Okada M."/>
            <person name="Plessy C."/>
            <person name="Shibata K."/>
            <person name="Shiraki T."/>
            <person name="Suzuki S."/>
            <person name="Tagami M."/>
            <person name="Waki K."/>
            <person name="Watahiki A."/>
            <person name="Okamura-Oho Y."/>
            <person name="Suzuki H."/>
            <person name="Kawai J."/>
            <person name="Hayashizaki Y."/>
        </authorList>
    </citation>
    <scope>NUCLEOTIDE SEQUENCE [LARGE SCALE MRNA] (ISOFORM 1)</scope>
    <source>
        <strain>C57BL/6J</strain>
        <tissue>Colon</tissue>
    </source>
</reference>
<reference key="2">
    <citation type="submission" date="2005-09" db="EMBL/GenBank/DDBJ databases">
        <authorList>
            <person name="Mural R.J."/>
            <person name="Adams M.D."/>
            <person name="Myers E.W."/>
            <person name="Smith H.O."/>
            <person name="Venter J.C."/>
        </authorList>
    </citation>
    <scope>NUCLEOTIDE SEQUENCE [LARGE SCALE GENOMIC DNA]</scope>
</reference>
<reference key="3">
    <citation type="journal article" date="2004" name="Genome Res.">
        <title>The status, quality, and expansion of the NIH full-length cDNA project: the Mammalian Gene Collection (MGC).</title>
        <authorList>
            <consortium name="The MGC Project Team"/>
        </authorList>
    </citation>
    <scope>NUCLEOTIDE SEQUENCE [LARGE SCALE MRNA] (ISOFORMS 1 AND 2)</scope>
    <source>
        <strain>C57BL/6J</strain>
        <strain>Czech II</strain>
        <tissue>Brain</tissue>
        <tissue>Mammary tumor</tissue>
    </source>
</reference>
<reference key="4">
    <citation type="journal article" date="2009" name="Cell">
        <title>TSPAN12 regulates retinal vascular development by promoting Norrin-but not Wnt-induced FZD4/beta-catenin signaling.</title>
        <authorList>
            <person name="Junge H.J."/>
            <person name="Yang S."/>
            <person name="Burton J.B."/>
            <person name="Paes K."/>
            <person name="Shu X."/>
            <person name="French D.M."/>
            <person name="Costa M."/>
            <person name="Rice D.S."/>
            <person name="Ye W."/>
        </authorList>
    </citation>
    <scope>FUNCTION</scope>
    <scope>SUBCELLULAR LOCATION</scope>
    <scope>TISSUE SPECIFICITY</scope>
    <scope>IDENTIFICATION IN A COMPLEX WITH FZD4 AND NDP</scope>
    <scope>DISRUPTION PHENOTYPE</scope>
</reference>
<comment type="function">
    <text evidence="1 3">Regulator of cell surface receptor signal transduction. Acts as a regulator of membrane proteinases such as ADAM10 and MMP14/MT1-MMP. Activates ADAM10-dependent cleavage activity of amyloid precursor protein (APP). Activates MMP14/MT1-MMP-dependent cleavage activity (By similarity). Plays a central role in retinal vascularization by regulating norrin (NDP) signal transduction. Acts in concert with norrin (NDP) to promote FZD4 multimerization and subsequent activation of FZD4, leading to promote accumulation of beta-catenin (CTNNB1) and stimulate LEF/TCF-mediated transcriptional programs. Suprisingly, it only activate the norrin (NDP)-dependent activation of FZD4, while it does not activate the Wnt-dependent activation of FZD4, suggesting the existence of a Wnt-independent signaling that also promote accumulation the beta-catenin (CTNNB1).</text>
</comment>
<comment type="subunit">
    <text evidence="1 3">Interacts (when palmitoylated) with ADAM10. Interacts with MMP14/MT1-MMP (By similarity). Component of a complex, at least composed of TSPAN12, FZD4 and norrin (NDP).</text>
</comment>
<comment type="subcellular location">
    <subcellularLocation>
        <location evidence="6">Cell membrane</location>
        <topology evidence="6">Multi-pass membrane protein</topology>
    </subcellularLocation>
</comment>
<comment type="alternative products">
    <event type="alternative splicing"/>
    <isoform>
        <id>Q8BKT6-1</id>
        <name>1</name>
        <sequence type="displayed"/>
    </isoform>
    <isoform>
        <id>Q8BKT6-2</id>
        <name>2</name>
        <sequence type="described" ref="VSP_038526"/>
    </isoform>
</comment>
<comment type="tissue specificity">
    <text evidence="3">Expressed in the neonatal retinal vasculature but not other retinal tissues. Also detected in the neonatal meningeal vasculature and in nonvascular cell types, such as the smooth muscle cells in the neonatal intestine.</text>
</comment>
<comment type="PTM">
    <text evidence="1">Palmitoylated; required for interaction with ADAM10.</text>
</comment>
<comment type="disruption phenotype">
    <text evidence="3">Mice are viable and fertile but display defects in retinal vascularization. In retinas between P5 and P12, the centrifugal outgrowth of the nerve fiber layer (NFL) vasculature is moderately delayed in retinas. At P11, vertical sprouts and plexiform layer (OPL) capillaries appear in wild-type mice, whereas both are completely absent in mutant mice. In adult mutant mice, the plexiform layer (OPL) remains avascular, confirming that the defect is not transient. The thickness of the outer nuclear layer in retinas is consistently reduced in adult mutant but not neonatal mice, indicating that neural cells are secondarily affected by the vascular defects.</text>
</comment>
<comment type="similarity">
    <text evidence="5">Belongs to the tetraspanin (TM4SF) family.</text>
</comment>
<keyword id="KW-0025">Alternative splicing</keyword>
<keyword id="KW-0037">Angiogenesis</keyword>
<keyword id="KW-1003">Cell membrane</keyword>
<keyword id="KW-0449">Lipoprotein</keyword>
<keyword id="KW-0472">Membrane</keyword>
<keyword id="KW-0564">Palmitate</keyword>
<keyword id="KW-1185">Reference proteome</keyword>
<keyword id="KW-0812">Transmembrane</keyword>
<keyword id="KW-1133">Transmembrane helix</keyword>
<proteinExistence type="evidence at protein level"/>
<sequence length="305" mass="35408">MAREDSVKCLRCLLYALNLLFWLMSISVLAVSAWMRDYLNNVLTLTAETRVEEAVILTYFPVVHPVMIAVCCFLIIVGMLGYCGTVKRNLLLLAWYFGTLLVIFCVELACGVWTYEQEVMVPVQWSDMVTLKARMTNYGLPRYRWLTHAWNYFQREFKCCGVVYFTDWLEMTEMDWPPDSCCVREFPGCSKQAHQEDLSDLYQEGCGKKMYSFLRGTKQLQVLRFLGISIGVTQILAMILTITLLWALYYDRREPGTDQMLSLKNDTSQHLSCHSVELLKPSLSRIFEHTSMANSFNTHFEMEEL</sequence>
<feature type="chain" id="PRO_0000290009" description="Tetraspanin-12">
    <location>
        <begin position="1"/>
        <end position="305"/>
    </location>
</feature>
<feature type="topological domain" description="Cytoplasmic" evidence="2">
    <location>
        <begin position="1"/>
        <end position="12"/>
    </location>
</feature>
<feature type="transmembrane region" description="Helical" evidence="2">
    <location>
        <begin position="13"/>
        <end position="33"/>
    </location>
</feature>
<feature type="topological domain" description="Extracellular" evidence="2">
    <location>
        <begin position="34"/>
        <end position="59"/>
    </location>
</feature>
<feature type="transmembrane region" description="Helical" evidence="2">
    <location>
        <begin position="60"/>
        <end position="80"/>
    </location>
</feature>
<feature type="topological domain" description="Cytoplasmic" evidence="2">
    <location>
        <begin position="81"/>
        <end position="89"/>
    </location>
</feature>
<feature type="transmembrane region" description="Helical" evidence="2">
    <location>
        <begin position="90"/>
        <end position="110"/>
    </location>
</feature>
<feature type="topological domain" description="Extracellular" evidence="2">
    <location>
        <begin position="111"/>
        <end position="224"/>
    </location>
</feature>
<feature type="transmembrane region" description="Helical" evidence="2">
    <location>
        <begin position="225"/>
        <end position="245"/>
    </location>
</feature>
<feature type="topological domain" description="Cytoplasmic" evidence="2">
    <location>
        <begin position="246"/>
        <end position="305"/>
    </location>
</feature>
<feature type="lipid moiety-binding region" description="S-palmitoyl cysteine" evidence="1">
    <location>
        <position position="9"/>
    </location>
</feature>
<feature type="lipid moiety-binding region" description="S-palmitoyl cysteine" evidence="1">
    <location>
        <position position="12"/>
    </location>
</feature>
<feature type="lipid moiety-binding region" description="S-palmitoyl cysteine" evidence="1">
    <location>
        <position position="83"/>
    </location>
</feature>
<feature type="splice variant" id="VSP_038526" description="In isoform 2." evidence="4">
    <location>
        <begin position="156"/>
        <end position="203"/>
    </location>
</feature>
<feature type="sequence conflict" description="In Ref. 1; BAC28354." evidence="5" ref="1">
    <original>K</original>
    <variation>E</variation>
    <location>
        <position position="8"/>
    </location>
</feature>
<name>TSN12_MOUSE</name>